<evidence type="ECO:0000255" key="1">
    <source>
        <dbReference type="HAMAP-Rule" id="MF_01341"/>
    </source>
</evidence>
<evidence type="ECO:0000256" key="2">
    <source>
        <dbReference type="SAM" id="MobiDB-lite"/>
    </source>
</evidence>
<evidence type="ECO:0000305" key="3"/>
<gene>
    <name evidence="1" type="primary">rplO</name>
    <name type="ordered locus">SP_0229</name>
</gene>
<feature type="chain" id="PRO_0000104822" description="Large ribosomal subunit protein uL15">
    <location>
        <begin position="1"/>
        <end position="146"/>
    </location>
</feature>
<feature type="region of interest" description="Disordered" evidence="2">
    <location>
        <begin position="1"/>
        <end position="51"/>
    </location>
</feature>
<feature type="compositionally biased region" description="Basic and acidic residues" evidence="2">
    <location>
        <begin position="1"/>
        <end position="13"/>
    </location>
</feature>
<feature type="compositionally biased region" description="Gly residues" evidence="2">
    <location>
        <begin position="23"/>
        <end position="35"/>
    </location>
</feature>
<feature type="compositionally biased region" description="Gly residues" evidence="2">
    <location>
        <begin position="42"/>
        <end position="51"/>
    </location>
</feature>
<dbReference type="EMBL" id="AE005672">
    <property type="protein sequence ID" value="AAK74409.1"/>
    <property type="molecule type" value="Genomic_DNA"/>
</dbReference>
<dbReference type="PIR" id="H95026">
    <property type="entry name" value="H95026"/>
</dbReference>
<dbReference type="PIR" id="H97897">
    <property type="entry name" value="H97897"/>
</dbReference>
<dbReference type="RefSeq" id="WP_000766087.1">
    <property type="nucleotide sequence ID" value="NZ_CP155539.1"/>
</dbReference>
<dbReference type="SMR" id="Q97SU3"/>
<dbReference type="PaxDb" id="170187-SP_0229"/>
<dbReference type="EnsemblBacteria" id="AAK74409">
    <property type="protein sequence ID" value="AAK74409"/>
    <property type="gene ID" value="SP_0229"/>
</dbReference>
<dbReference type="GeneID" id="45652290"/>
<dbReference type="KEGG" id="spn:SP_0229"/>
<dbReference type="eggNOG" id="COG0200">
    <property type="taxonomic scope" value="Bacteria"/>
</dbReference>
<dbReference type="PhylomeDB" id="Q97SU3"/>
<dbReference type="BioCyc" id="SPNE170187:G1FZB-233-MONOMER"/>
<dbReference type="Proteomes" id="UP000000585">
    <property type="component" value="Chromosome"/>
</dbReference>
<dbReference type="GO" id="GO:0022625">
    <property type="term" value="C:cytosolic large ribosomal subunit"/>
    <property type="evidence" value="ECO:0007669"/>
    <property type="project" value="TreeGrafter"/>
</dbReference>
<dbReference type="GO" id="GO:0019843">
    <property type="term" value="F:rRNA binding"/>
    <property type="evidence" value="ECO:0007669"/>
    <property type="project" value="UniProtKB-UniRule"/>
</dbReference>
<dbReference type="GO" id="GO:0003735">
    <property type="term" value="F:structural constituent of ribosome"/>
    <property type="evidence" value="ECO:0007669"/>
    <property type="project" value="InterPro"/>
</dbReference>
<dbReference type="GO" id="GO:0006412">
    <property type="term" value="P:translation"/>
    <property type="evidence" value="ECO:0007669"/>
    <property type="project" value="UniProtKB-UniRule"/>
</dbReference>
<dbReference type="FunFam" id="3.100.10.10:FF:000004">
    <property type="entry name" value="50S ribosomal protein L15"/>
    <property type="match status" value="1"/>
</dbReference>
<dbReference type="Gene3D" id="3.100.10.10">
    <property type="match status" value="1"/>
</dbReference>
<dbReference type="HAMAP" id="MF_01341">
    <property type="entry name" value="Ribosomal_uL15"/>
    <property type="match status" value="1"/>
</dbReference>
<dbReference type="InterPro" id="IPR030878">
    <property type="entry name" value="Ribosomal_uL15"/>
</dbReference>
<dbReference type="InterPro" id="IPR021131">
    <property type="entry name" value="Ribosomal_uL15/eL18"/>
</dbReference>
<dbReference type="InterPro" id="IPR036227">
    <property type="entry name" value="Ribosomal_uL15/eL18_sf"/>
</dbReference>
<dbReference type="InterPro" id="IPR005749">
    <property type="entry name" value="Ribosomal_uL15_bac-type"/>
</dbReference>
<dbReference type="InterPro" id="IPR001196">
    <property type="entry name" value="Ribosomal_uL15_CS"/>
</dbReference>
<dbReference type="NCBIfam" id="TIGR01071">
    <property type="entry name" value="rplO_bact"/>
    <property type="match status" value="1"/>
</dbReference>
<dbReference type="PANTHER" id="PTHR12934">
    <property type="entry name" value="50S RIBOSOMAL PROTEIN L15"/>
    <property type="match status" value="1"/>
</dbReference>
<dbReference type="PANTHER" id="PTHR12934:SF11">
    <property type="entry name" value="LARGE RIBOSOMAL SUBUNIT PROTEIN UL15M"/>
    <property type="match status" value="1"/>
</dbReference>
<dbReference type="Pfam" id="PF00828">
    <property type="entry name" value="Ribosomal_L27A"/>
    <property type="match status" value="1"/>
</dbReference>
<dbReference type="SUPFAM" id="SSF52080">
    <property type="entry name" value="Ribosomal proteins L15p and L18e"/>
    <property type="match status" value="1"/>
</dbReference>
<dbReference type="PROSITE" id="PS00475">
    <property type="entry name" value="RIBOSOMAL_L15"/>
    <property type="match status" value="1"/>
</dbReference>
<name>RL15_STRPN</name>
<protein>
    <recommendedName>
        <fullName evidence="1">Large ribosomal subunit protein uL15</fullName>
    </recommendedName>
    <alternativeName>
        <fullName evidence="3">50S ribosomal protein L15</fullName>
    </alternativeName>
</protein>
<proteinExistence type="inferred from homology"/>
<keyword id="KW-1185">Reference proteome</keyword>
<keyword id="KW-0687">Ribonucleoprotein</keyword>
<keyword id="KW-0689">Ribosomal protein</keyword>
<keyword id="KW-0694">RNA-binding</keyword>
<keyword id="KW-0699">rRNA-binding</keyword>
<accession>Q97SU3</accession>
<reference key="1">
    <citation type="journal article" date="2001" name="Science">
        <title>Complete genome sequence of a virulent isolate of Streptococcus pneumoniae.</title>
        <authorList>
            <person name="Tettelin H."/>
            <person name="Nelson K.E."/>
            <person name="Paulsen I.T."/>
            <person name="Eisen J.A."/>
            <person name="Read T.D."/>
            <person name="Peterson S.N."/>
            <person name="Heidelberg J.F."/>
            <person name="DeBoy R.T."/>
            <person name="Haft D.H."/>
            <person name="Dodson R.J."/>
            <person name="Durkin A.S."/>
            <person name="Gwinn M.L."/>
            <person name="Kolonay J.F."/>
            <person name="Nelson W.C."/>
            <person name="Peterson J.D."/>
            <person name="Umayam L.A."/>
            <person name="White O."/>
            <person name="Salzberg S.L."/>
            <person name="Lewis M.R."/>
            <person name="Radune D."/>
            <person name="Holtzapple E.K."/>
            <person name="Khouri H.M."/>
            <person name="Wolf A.M."/>
            <person name="Utterback T.R."/>
            <person name="Hansen C.L."/>
            <person name="McDonald L.A."/>
            <person name="Feldblyum T.V."/>
            <person name="Angiuoli S.V."/>
            <person name="Dickinson T."/>
            <person name="Hickey E.K."/>
            <person name="Holt I.E."/>
            <person name="Loftus B.J."/>
            <person name="Yang F."/>
            <person name="Smith H.O."/>
            <person name="Venter J.C."/>
            <person name="Dougherty B.A."/>
            <person name="Morrison D.A."/>
            <person name="Hollingshead S.K."/>
            <person name="Fraser C.M."/>
        </authorList>
    </citation>
    <scope>NUCLEOTIDE SEQUENCE [LARGE SCALE GENOMIC DNA]</scope>
    <source>
        <strain>ATCC BAA-334 / TIGR4</strain>
    </source>
</reference>
<comment type="function">
    <text evidence="1">Binds to the 23S rRNA.</text>
</comment>
<comment type="subunit">
    <text evidence="1">Part of the 50S ribosomal subunit.</text>
</comment>
<comment type="similarity">
    <text evidence="1">Belongs to the universal ribosomal protein uL15 family.</text>
</comment>
<sequence>MKLHELKPAEGSRKVRNRVGRGTSSGNGKTSGRGQKGQKARSGGGVRLGFEGGQTPLFRRLPKRGFTNINAKEYAIVNLDQLNVFEDGAEVTPVVLIEAGIVKAEKSGIKILGNGELTKKLTVKAAKFSKSAEEAITAKGGSVEVI</sequence>
<organism>
    <name type="scientific">Streptococcus pneumoniae serotype 4 (strain ATCC BAA-334 / TIGR4)</name>
    <dbReference type="NCBI Taxonomy" id="170187"/>
    <lineage>
        <taxon>Bacteria</taxon>
        <taxon>Bacillati</taxon>
        <taxon>Bacillota</taxon>
        <taxon>Bacilli</taxon>
        <taxon>Lactobacillales</taxon>
        <taxon>Streptococcaceae</taxon>
        <taxon>Streptococcus</taxon>
    </lineage>
</organism>